<sequence>MSQVILDLQLACENHAGLPDEAQFQRWLDGVIPQFQEEAEVTIRLVDETESHDLNLTYRGKDKPTNVLSFPFEAPPGIEMPLLGDLIICRQVVEQEAQEQSKPLEAHWAHMVVHGSLHLLGYDHIDDDEAEEMESLETEIMLAMGYEDPYIAEKIAE</sequence>
<organism>
    <name type="scientific">Salmonella dublin (strain CT_02021853)</name>
    <dbReference type="NCBI Taxonomy" id="439851"/>
    <lineage>
        <taxon>Bacteria</taxon>
        <taxon>Pseudomonadati</taxon>
        <taxon>Pseudomonadota</taxon>
        <taxon>Gammaproteobacteria</taxon>
        <taxon>Enterobacterales</taxon>
        <taxon>Enterobacteriaceae</taxon>
        <taxon>Salmonella</taxon>
    </lineage>
</organism>
<feature type="chain" id="PRO_1000089202" description="Endoribonuclease YbeY">
    <location>
        <begin position="1"/>
        <end position="157"/>
    </location>
</feature>
<feature type="binding site" evidence="1">
    <location>
        <position position="114"/>
    </location>
    <ligand>
        <name>Zn(2+)</name>
        <dbReference type="ChEBI" id="CHEBI:29105"/>
        <note>catalytic</note>
    </ligand>
</feature>
<feature type="binding site" evidence="1">
    <location>
        <position position="118"/>
    </location>
    <ligand>
        <name>Zn(2+)</name>
        <dbReference type="ChEBI" id="CHEBI:29105"/>
        <note>catalytic</note>
    </ligand>
</feature>
<feature type="binding site" evidence="1">
    <location>
        <position position="124"/>
    </location>
    <ligand>
        <name>Zn(2+)</name>
        <dbReference type="ChEBI" id="CHEBI:29105"/>
        <note>catalytic</note>
    </ligand>
</feature>
<evidence type="ECO:0000255" key="1">
    <source>
        <dbReference type="HAMAP-Rule" id="MF_00009"/>
    </source>
</evidence>
<dbReference type="EC" id="3.1.-.-" evidence="1"/>
<dbReference type="EMBL" id="CP001144">
    <property type="protein sequence ID" value="ACH76358.1"/>
    <property type="molecule type" value="Genomic_DNA"/>
</dbReference>
<dbReference type="RefSeq" id="WP_000084480.1">
    <property type="nucleotide sequence ID" value="NC_011205.1"/>
</dbReference>
<dbReference type="SMR" id="B5FNB0"/>
<dbReference type="KEGG" id="sed:SeD_A0774"/>
<dbReference type="HOGENOM" id="CLU_106710_0_1_6"/>
<dbReference type="Proteomes" id="UP000008322">
    <property type="component" value="Chromosome"/>
</dbReference>
<dbReference type="GO" id="GO:0005737">
    <property type="term" value="C:cytoplasm"/>
    <property type="evidence" value="ECO:0007669"/>
    <property type="project" value="UniProtKB-SubCell"/>
</dbReference>
<dbReference type="GO" id="GO:0004222">
    <property type="term" value="F:metalloendopeptidase activity"/>
    <property type="evidence" value="ECO:0007669"/>
    <property type="project" value="InterPro"/>
</dbReference>
<dbReference type="GO" id="GO:0004521">
    <property type="term" value="F:RNA endonuclease activity"/>
    <property type="evidence" value="ECO:0007669"/>
    <property type="project" value="UniProtKB-UniRule"/>
</dbReference>
<dbReference type="GO" id="GO:0008270">
    <property type="term" value="F:zinc ion binding"/>
    <property type="evidence" value="ECO:0007669"/>
    <property type="project" value="UniProtKB-UniRule"/>
</dbReference>
<dbReference type="GO" id="GO:0006364">
    <property type="term" value="P:rRNA processing"/>
    <property type="evidence" value="ECO:0007669"/>
    <property type="project" value="UniProtKB-UniRule"/>
</dbReference>
<dbReference type="Gene3D" id="3.40.390.30">
    <property type="entry name" value="Metalloproteases ('zincins'), catalytic domain"/>
    <property type="match status" value="1"/>
</dbReference>
<dbReference type="HAMAP" id="MF_00009">
    <property type="entry name" value="Endoribonucl_YbeY"/>
    <property type="match status" value="1"/>
</dbReference>
<dbReference type="InterPro" id="IPR023091">
    <property type="entry name" value="MetalPrtase_cat_dom_sf_prd"/>
</dbReference>
<dbReference type="InterPro" id="IPR002036">
    <property type="entry name" value="YbeY"/>
</dbReference>
<dbReference type="InterPro" id="IPR020549">
    <property type="entry name" value="YbeY_CS"/>
</dbReference>
<dbReference type="NCBIfam" id="TIGR00043">
    <property type="entry name" value="rRNA maturation RNase YbeY"/>
    <property type="match status" value="1"/>
</dbReference>
<dbReference type="PANTHER" id="PTHR46986">
    <property type="entry name" value="ENDORIBONUCLEASE YBEY, CHLOROPLASTIC"/>
    <property type="match status" value="1"/>
</dbReference>
<dbReference type="PANTHER" id="PTHR46986:SF1">
    <property type="entry name" value="ENDORIBONUCLEASE YBEY, CHLOROPLASTIC"/>
    <property type="match status" value="1"/>
</dbReference>
<dbReference type="Pfam" id="PF02130">
    <property type="entry name" value="YbeY"/>
    <property type="match status" value="1"/>
</dbReference>
<dbReference type="SUPFAM" id="SSF55486">
    <property type="entry name" value="Metalloproteases ('zincins'), catalytic domain"/>
    <property type="match status" value="1"/>
</dbReference>
<dbReference type="PROSITE" id="PS01306">
    <property type="entry name" value="UPF0054"/>
    <property type="match status" value="1"/>
</dbReference>
<gene>
    <name evidence="1" type="primary">ybeY</name>
    <name type="ordered locus">SeD_A0774</name>
</gene>
<reference key="1">
    <citation type="journal article" date="2011" name="J. Bacteriol.">
        <title>Comparative genomics of 28 Salmonella enterica isolates: evidence for CRISPR-mediated adaptive sublineage evolution.</title>
        <authorList>
            <person name="Fricke W.F."/>
            <person name="Mammel M.K."/>
            <person name="McDermott P.F."/>
            <person name="Tartera C."/>
            <person name="White D.G."/>
            <person name="Leclerc J.E."/>
            <person name="Ravel J."/>
            <person name="Cebula T.A."/>
        </authorList>
    </citation>
    <scope>NUCLEOTIDE SEQUENCE [LARGE SCALE GENOMIC DNA]</scope>
    <source>
        <strain>CT_02021853</strain>
    </source>
</reference>
<accession>B5FNB0</accession>
<keyword id="KW-0963">Cytoplasm</keyword>
<keyword id="KW-0255">Endonuclease</keyword>
<keyword id="KW-0378">Hydrolase</keyword>
<keyword id="KW-0479">Metal-binding</keyword>
<keyword id="KW-0540">Nuclease</keyword>
<keyword id="KW-0690">Ribosome biogenesis</keyword>
<keyword id="KW-0698">rRNA processing</keyword>
<keyword id="KW-0862">Zinc</keyword>
<comment type="function">
    <text evidence="1">Single strand-specific metallo-endoribonuclease involved in late-stage 70S ribosome quality control and in maturation of the 3' terminus of the 16S rRNA.</text>
</comment>
<comment type="cofactor">
    <cofactor evidence="1">
        <name>Zn(2+)</name>
        <dbReference type="ChEBI" id="CHEBI:29105"/>
    </cofactor>
    <text evidence="1">Binds 1 zinc ion.</text>
</comment>
<comment type="subcellular location">
    <subcellularLocation>
        <location evidence="1">Cytoplasm</location>
    </subcellularLocation>
</comment>
<comment type="similarity">
    <text evidence="1">Belongs to the endoribonuclease YbeY family.</text>
</comment>
<name>YBEY_SALDC</name>
<protein>
    <recommendedName>
        <fullName evidence="1">Endoribonuclease YbeY</fullName>
        <ecNumber evidence="1">3.1.-.-</ecNumber>
    </recommendedName>
</protein>
<proteinExistence type="inferred from homology"/>